<name>KADA_PYRAB</name>
<dbReference type="EC" id="2.7.4.3"/>
<dbReference type="EMBL" id="AJ248284">
    <property type="protein sequence ID" value="CAB49239.1"/>
    <property type="molecule type" value="Genomic_DNA"/>
</dbReference>
<dbReference type="EMBL" id="HE613800">
    <property type="protein sequence ID" value="CCE69694.1"/>
    <property type="molecule type" value="Genomic_DNA"/>
</dbReference>
<dbReference type="PIR" id="H75144">
    <property type="entry name" value="H75144"/>
</dbReference>
<dbReference type="RefSeq" id="WP_048146533.1">
    <property type="nucleotide sequence ID" value="NC_000868.1"/>
</dbReference>
<dbReference type="SMR" id="Q9V1V9"/>
<dbReference type="STRING" id="272844.PAB2140"/>
<dbReference type="KEGG" id="pab:PAB2140"/>
<dbReference type="PATRIC" id="fig|272844.11.peg.338"/>
<dbReference type="eggNOG" id="arCOG01039">
    <property type="taxonomic scope" value="Archaea"/>
</dbReference>
<dbReference type="HOGENOM" id="CLU_119371_0_0_2"/>
<dbReference type="OrthoDB" id="26198at2157"/>
<dbReference type="PhylomeDB" id="Q9V1V9"/>
<dbReference type="Proteomes" id="UP000000810">
    <property type="component" value="Chromosome"/>
</dbReference>
<dbReference type="Proteomes" id="UP000009139">
    <property type="component" value="Chromosome"/>
</dbReference>
<dbReference type="GO" id="GO:0005737">
    <property type="term" value="C:cytoplasm"/>
    <property type="evidence" value="ECO:0007669"/>
    <property type="project" value="UniProtKB-SubCell"/>
</dbReference>
<dbReference type="GO" id="GO:0004017">
    <property type="term" value="F:adenylate kinase activity"/>
    <property type="evidence" value="ECO:0007669"/>
    <property type="project" value="UniProtKB-UniRule"/>
</dbReference>
<dbReference type="GO" id="GO:0005524">
    <property type="term" value="F:ATP binding"/>
    <property type="evidence" value="ECO:0007669"/>
    <property type="project" value="UniProtKB-UniRule"/>
</dbReference>
<dbReference type="Gene3D" id="3.40.50.300">
    <property type="entry name" value="P-loop containing nucleotide triphosphate hydrolases"/>
    <property type="match status" value="1"/>
</dbReference>
<dbReference type="HAMAP" id="MF_00234">
    <property type="entry name" value="Adenylate_kinase_AdkA"/>
    <property type="match status" value="1"/>
</dbReference>
<dbReference type="InterPro" id="IPR023477">
    <property type="entry name" value="Adenylate_kinase_AdkA"/>
</dbReference>
<dbReference type="InterPro" id="IPR027417">
    <property type="entry name" value="P-loop_NTPase"/>
</dbReference>
<dbReference type="NCBIfam" id="NF003122">
    <property type="entry name" value="PRK04040.1"/>
    <property type="match status" value="1"/>
</dbReference>
<dbReference type="Pfam" id="PF13207">
    <property type="entry name" value="AAA_17"/>
    <property type="match status" value="1"/>
</dbReference>
<dbReference type="SUPFAM" id="SSF52540">
    <property type="entry name" value="P-loop containing nucleoside triphosphate hydrolases"/>
    <property type="match status" value="1"/>
</dbReference>
<organism>
    <name type="scientific">Pyrococcus abyssi (strain GE5 / Orsay)</name>
    <dbReference type="NCBI Taxonomy" id="272844"/>
    <lineage>
        <taxon>Archaea</taxon>
        <taxon>Methanobacteriati</taxon>
        <taxon>Methanobacteriota</taxon>
        <taxon>Thermococci</taxon>
        <taxon>Thermococcales</taxon>
        <taxon>Thermococcaceae</taxon>
        <taxon>Pyrococcus</taxon>
    </lineage>
</organism>
<comment type="catalytic activity">
    <reaction>
        <text>AMP + ATP = 2 ADP</text>
        <dbReference type="Rhea" id="RHEA:12973"/>
        <dbReference type="ChEBI" id="CHEBI:30616"/>
        <dbReference type="ChEBI" id="CHEBI:456215"/>
        <dbReference type="ChEBI" id="CHEBI:456216"/>
        <dbReference type="EC" id="2.7.4.3"/>
    </reaction>
</comment>
<comment type="subcellular location">
    <subcellularLocation>
        <location evidence="1">Cytoplasm</location>
    </subcellularLocation>
</comment>
<comment type="similarity">
    <text evidence="2">Belongs to the archaeal adenylate kinase family.</text>
</comment>
<reference key="1">
    <citation type="journal article" date="2003" name="Mol. Microbiol.">
        <title>An integrated analysis of the genome of the hyperthermophilic archaeon Pyrococcus abyssi.</title>
        <authorList>
            <person name="Cohen G.N."/>
            <person name="Barbe V."/>
            <person name="Flament D."/>
            <person name="Galperin M."/>
            <person name="Heilig R."/>
            <person name="Lecompte O."/>
            <person name="Poch O."/>
            <person name="Prieur D."/>
            <person name="Querellou J."/>
            <person name="Ripp R."/>
            <person name="Thierry J.-C."/>
            <person name="Van der Oost J."/>
            <person name="Weissenbach J."/>
            <person name="Zivanovic Y."/>
            <person name="Forterre P."/>
        </authorList>
    </citation>
    <scope>NUCLEOTIDE SEQUENCE [LARGE SCALE GENOMIC DNA]</scope>
    <source>
        <strain>GE5 / Orsay</strain>
    </source>
</reference>
<reference key="2">
    <citation type="journal article" date="2012" name="Curr. Microbiol.">
        <title>Re-annotation of two hyperthermophilic archaea Pyrococcus abyssi GE5 and Pyrococcus furiosus DSM 3638.</title>
        <authorList>
            <person name="Gao J."/>
            <person name="Wang J."/>
        </authorList>
    </citation>
    <scope>GENOME REANNOTATION</scope>
    <source>
        <strain>GE5 / Orsay</strain>
    </source>
</reference>
<sequence length="196" mass="22286">MSFVVIITGIPGVGKSTITRLALQRTKAKFKLINFGDLMFEEAVKAGLVNHRDEMRKLPLEIQRDLQMKVAKKISEMARQQPILLDTHATIKTPHGYLLGLPYEVIKTLNPNFIVIIEATPSEILGRRLRDLKRDRDVETEEQIQRHQDLNRAAAIAYAMHSNALIKIIENHEDKGLEEAVNELVEILDLAVKEYA</sequence>
<accession>Q9V1V9</accession>
<accession>G8ZHV1</accession>
<protein>
    <recommendedName>
        <fullName>Adenylate kinase</fullName>
        <shortName>AK</shortName>
        <ecNumber>2.7.4.3</ecNumber>
    </recommendedName>
    <alternativeName>
        <fullName>ATP-AMP transphosphorylase</fullName>
    </alternativeName>
</protein>
<keyword id="KW-0067">ATP-binding</keyword>
<keyword id="KW-0963">Cytoplasm</keyword>
<keyword id="KW-0418">Kinase</keyword>
<keyword id="KW-0547">Nucleotide-binding</keyword>
<keyword id="KW-0808">Transferase</keyword>
<gene>
    <name type="primary">adkA</name>
    <name type="ordered locus">PYRAB03170</name>
    <name type="ORF">PAB2140</name>
</gene>
<proteinExistence type="inferred from homology"/>
<feature type="chain" id="PRO_0000131820" description="Adenylate kinase">
    <location>
        <begin position="1"/>
        <end position="196"/>
    </location>
</feature>
<feature type="binding site" evidence="1">
    <location>
        <begin position="9"/>
        <end position="17"/>
    </location>
    <ligand>
        <name>ATP</name>
        <dbReference type="ChEBI" id="CHEBI:30616"/>
    </ligand>
</feature>
<evidence type="ECO:0000250" key="1"/>
<evidence type="ECO:0000305" key="2"/>